<name>HEM3_STAEQ</name>
<proteinExistence type="inferred from homology"/>
<feature type="chain" id="PRO_0000142996" description="Porphobilinogen deaminase">
    <location>
        <begin position="1"/>
        <end position="308"/>
    </location>
</feature>
<feature type="modified residue" description="S-(dipyrrolylmethanemethyl)cysteine" evidence="1">
    <location>
        <position position="241"/>
    </location>
</feature>
<organism>
    <name type="scientific">Staphylococcus epidermidis (strain ATCC 35984 / DSM 28319 / BCRC 17069 / CCUG 31568 / BM 3577 / RP62A)</name>
    <dbReference type="NCBI Taxonomy" id="176279"/>
    <lineage>
        <taxon>Bacteria</taxon>
        <taxon>Bacillati</taxon>
        <taxon>Bacillota</taxon>
        <taxon>Bacilli</taxon>
        <taxon>Bacillales</taxon>
        <taxon>Staphylococcaceae</taxon>
        <taxon>Staphylococcus</taxon>
    </lineage>
</organism>
<reference key="1">
    <citation type="journal article" date="2005" name="J. Bacteriol.">
        <title>Insights on evolution of virulence and resistance from the complete genome analysis of an early methicillin-resistant Staphylococcus aureus strain and a biofilm-producing methicillin-resistant Staphylococcus epidermidis strain.</title>
        <authorList>
            <person name="Gill S.R."/>
            <person name="Fouts D.E."/>
            <person name="Archer G.L."/>
            <person name="Mongodin E.F."/>
            <person name="DeBoy R.T."/>
            <person name="Ravel J."/>
            <person name="Paulsen I.T."/>
            <person name="Kolonay J.F."/>
            <person name="Brinkac L.M."/>
            <person name="Beanan M.J."/>
            <person name="Dodson R.J."/>
            <person name="Daugherty S.C."/>
            <person name="Madupu R."/>
            <person name="Angiuoli S.V."/>
            <person name="Durkin A.S."/>
            <person name="Haft D.H."/>
            <person name="Vamathevan J.J."/>
            <person name="Khouri H."/>
            <person name="Utterback T.R."/>
            <person name="Lee C."/>
            <person name="Dimitrov G."/>
            <person name="Jiang L."/>
            <person name="Qin H."/>
            <person name="Weidman J."/>
            <person name="Tran K."/>
            <person name="Kang K.H."/>
            <person name="Hance I.R."/>
            <person name="Nelson K.E."/>
            <person name="Fraser C.M."/>
        </authorList>
    </citation>
    <scope>NUCLEOTIDE SEQUENCE [LARGE SCALE GENOMIC DNA]</scope>
    <source>
        <strain>ATCC 35984 / DSM 28319 / BCRC 17069 / CCUG 31568 / BM 3577 / RP62A</strain>
    </source>
</reference>
<comment type="function">
    <text evidence="1">Tetrapolymerization of the monopyrrole PBG into the hydroxymethylbilane pre-uroporphyrinogen in several discrete steps.</text>
</comment>
<comment type="catalytic activity">
    <reaction evidence="1">
        <text>4 porphobilinogen + H2O = hydroxymethylbilane + 4 NH4(+)</text>
        <dbReference type="Rhea" id="RHEA:13185"/>
        <dbReference type="ChEBI" id="CHEBI:15377"/>
        <dbReference type="ChEBI" id="CHEBI:28938"/>
        <dbReference type="ChEBI" id="CHEBI:57845"/>
        <dbReference type="ChEBI" id="CHEBI:58126"/>
        <dbReference type="EC" id="2.5.1.61"/>
    </reaction>
</comment>
<comment type="cofactor">
    <cofactor evidence="1">
        <name>dipyrromethane</name>
        <dbReference type="ChEBI" id="CHEBI:60342"/>
    </cofactor>
    <text evidence="1">Binds 1 dipyrromethane group covalently.</text>
</comment>
<comment type="pathway">
    <text evidence="1">Porphyrin-containing compound metabolism; protoporphyrin-IX biosynthesis; coproporphyrinogen-III from 5-aminolevulinate: step 2/4.</text>
</comment>
<comment type="subunit">
    <text evidence="1">Monomer.</text>
</comment>
<comment type="miscellaneous">
    <text evidence="1">The porphobilinogen subunits are added to the dipyrromethane group.</text>
</comment>
<comment type="similarity">
    <text evidence="1">Belongs to the HMBS family.</text>
</comment>
<accession>Q5HNN3</accession>
<dbReference type="EC" id="2.5.1.61" evidence="1"/>
<dbReference type="EMBL" id="CP000029">
    <property type="protein sequence ID" value="AAW54591.1"/>
    <property type="molecule type" value="Genomic_DNA"/>
</dbReference>
<dbReference type="RefSeq" id="WP_001830811.1">
    <property type="nucleotide sequence ID" value="NC_002976.3"/>
</dbReference>
<dbReference type="SMR" id="Q5HNN3"/>
<dbReference type="STRING" id="176279.SERP1234"/>
<dbReference type="GeneID" id="50018540"/>
<dbReference type="KEGG" id="ser:SERP1234"/>
<dbReference type="eggNOG" id="COG0181">
    <property type="taxonomic scope" value="Bacteria"/>
</dbReference>
<dbReference type="HOGENOM" id="CLU_019704_1_2_9"/>
<dbReference type="UniPathway" id="UPA00251">
    <property type="reaction ID" value="UER00319"/>
</dbReference>
<dbReference type="Proteomes" id="UP000000531">
    <property type="component" value="Chromosome"/>
</dbReference>
<dbReference type="GO" id="GO:0005737">
    <property type="term" value="C:cytoplasm"/>
    <property type="evidence" value="ECO:0007669"/>
    <property type="project" value="TreeGrafter"/>
</dbReference>
<dbReference type="GO" id="GO:0004418">
    <property type="term" value="F:hydroxymethylbilane synthase activity"/>
    <property type="evidence" value="ECO:0007669"/>
    <property type="project" value="UniProtKB-UniRule"/>
</dbReference>
<dbReference type="GO" id="GO:0006782">
    <property type="term" value="P:protoporphyrinogen IX biosynthetic process"/>
    <property type="evidence" value="ECO:0007669"/>
    <property type="project" value="UniProtKB-UniRule"/>
</dbReference>
<dbReference type="CDD" id="cd13646">
    <property type="entry name" value="PBP2_EcHMBS_like"/>
    <property type="match status" value="1"/>
</dbReference>
<dbReference type="FunFam" id="3.40.190.10:FF:000004">
    <property type="entry name" value="Porphobilinogen deaminase"/>
    <property type="match status" value="1"/>
</dbReference>
<dbReference type="FunFam" id="3.40.190.10:FF:000005">
    <property type="entry name" value="Porphobilinogen deaminase"/>
    <property type="match status" value="1"/>
</dbReference>
<dbReference type="Gene3D" id="3.40.190.10">
    <property type="entry name" value="Periplasmic binding protein-like II"/>
    <property type="match status" value="2"/>
</dbReference>
<dbReference type="Gene3D" id="3.30.160.40">
    <property type="entry name" value="Porphobilinogen deaminase, C-terminal domain"/>
    <property type="match status" value="1"/>
</dbReference>
<dbReference type="HAMAP" id="MF_00260">
    <property type="entry name" value="Porphobil_deam"/>
    <property type="match status" value="1"/>
</dbReference>
<dbReference type="InterPro" id="IPR000860">
    <property type="entry name" value="HemC"/>
</dbReference>
<dbReference type="InterPro" id="IPR022419">
    <property type="entry name" value="Porphobilin_deaminase_cofac_BS"/>
</dbReference>
<dbReference type="InterPro" id="IPR022417">
    <property type="entry name" value="Porphobilin_deaminase_N"/>
</dbReference>
<dbReference type="InterPro" id="IPR022418">
    <property type="entry name" value="Porphobilinogen_deaminase_C"/>
</dbReference>
<dbReference type="InterPro" id="IPR036803">
    <property type="entry name" value="Porphobilinogen_deaminase_C_sf"/>
</dbReference>
<dbReference type="NCBIfam" id="TIGR00212">
    <property type="entry name" value="hemC"/>
    <property type="match status" value="1"/>
</dbReference>
<dbReference type="PANTHER" id="PTHR11557">
    <property type="entry name" value="PORPHOBILINOGEN DEAMINASE"/>
    <property type="match status" value="1"/>
</dbReference>
<dbReference type="PANTHER" id="PTHR11557:SF0">
    <property type="entry name" value="PORPHOBILINOGEN DEAMINASE"/>
    <property type="match status" value="1"/>
</dbReference>
<dbReference type="Pfam" id="PF01379">
    <property type="entry name" value="Porphobil_deam"/>
    <property type="match status" value="1"/>
</dbReference>
<dbReference type="Pfam" id="PF03900">
    <property type="entry name" value="Porphobil_deamC"/>
    <property type="match status" value="1"/>
</dbReference>
<dbReference type="PIRSF" id="PIRSF001438">
    <property type="entry name" value="4pyrrol_synth_OHMeBilane_synth"/>
    <property type="match status" value="1"/>
</dbReference>
<dbReference type="PRINTS" id="PR00151">
    <property type="entry name" value="PORPHBDMNASE"/>
</dbReference>
<dbReference type="SUPFAM" id="SSF53850">
    <property type="entry name" value="Periplasmic binding protein-like II"/>
    <property type="match status" value="1"/>
</dbReference>
<dbReference type="SUPFAM" id="SSF54782">
    <property type="entry name" value="Porphobilinogen deaminase (hydroxymethylbilane synthase), C-terminal domain"/>
    <property type="match status" value="1"/>
</dbReference>
<dbReference type="PROSITE" id="PS00533">
    <property type="entry name" value="PORPHOBILINOGEN_DEAM"/>
    <property type="match status" value="1"/>
</dbReference>
<gene>
    <name evidence="1" type="primary">hemC</name>
    <name type="ordered locus">SERP1234</name>
</gene>
<evidence type="ECO:0000255" key="1">
    <source>
        <dbReference type="HAMAP-Rule" id="MF_00260"/>
    </source>
</evidence>
<sequence length="308" mass="34227">MRKLIVGSRRSKLALTQSQQFIDKLKFIDPSLDIEIKEIVTKGDKIVDKQLSKVGGKGLFVKEIQNELFNKEIDMAIHSLKDVPSMIPDGLTLGCIPDREIPFDAYIAKNHIPLQELSEGSIVGTSSLRRGAQILSKYPHLKIKWIRGNIDTRLKKLETEDYDAIILAAAGLKRMGWSDNIVTTYLDRDILLPAIGQGALGIECRSDDKELLDLLSKVHNHDVAQCVTAERTFLSEMDGSCQVPIGGYATIAQDNQIEFTGLIMSPDGKERYEHTALGTDPVKLGIEVSQVLKKQGAYDIIKKLNEAE</sequence>
<keyword id="KW-0627">Porphyrin biosynthesis</keyword>
<keyword id="KW-1185">Reference proteome</keyword>
<keyword id="KW-0808">Transferase</keyword>
<protein>
    <recommendedName>
        <fullName evidence="1">Porphobilinogen deaminase</fullName>
        <shortName evidence="1">PBG</shortName>
        <ecNumber evidence="1">2.5.1.61</ecNumber>
    </recommendedName>
    <alternativeName>
        <fullName evidence="1">Hydroxymethylbilane synthase</fullName>
        <shortName evidence="1">HMBS</shortName>
    </alternativeName>
    <alternativeName>
        <fullName evidence="1">Pre-uroporphyrinogen synthase</fullName>
    </alternativeName>
</protein>